<dbReference type="EMBL" id="AL596171">
    <property type="protein sequence ID" value="CAC97383.1"/>
    <property type="molecule type" value="Genomic_DNA"/>
</dbReference>
<dbReference type="PIR" id="AG1701">
    <property type="entry name" value="AG1701"/>
</dbReference>
<dbReference type="SMR" id="P66208"/>
<dbReference type="STRING" id="272626.gene:17566511"/>
<dbReference type="KEGG" id="lin:rpmF.2"/>
<dbReference type="eggNOG" id="COG0333">
    <property type="taxonomic scope" value="Bacteria"/>
</dbReference>
<dbReference type="HOGENOM" id="CLU_129084_1_3_9"/>
<dbReference type="OrthoDB" id="9812874at2"/>
<dbReference type="Proteomes" id="UP000002513">
    <property type="component" value="Chromosome"/>
</dbReference>
<dbReference type="GO" id="GO:0015934">
    <property type="term" value="C:large ribosomal subunit"/>
    <property type="evidence" value="ECO:0007669"/>
    <property type="project" value="InterPro"/>
</dbReference>
<dbReference type="GO" id="GO:0003735">
    <property type="term" value="F:structural constituent of ribosome"/>
    <property type="evidence" value="ECO:0007669"/>
    <property type="project" value="InterPro"/>
</dbReference>
<dbReference type="GO" id="GO:0006412">
    <property type="term" value="P:translation"/>
    <property type="evidence" value="ECO:0007669"/>
    <property type="project" value="UniProtKB-UniRule"/>
</dbReference>
<dbReference type="HAMAP" id="MF_00340">
    <property type="entry name" value="Ribosomal_bL32"/>
    <property type="match status" value="1"/>
</dbReference>
<dbReference type="InterPro" id="IPR002677">
    <property type="entry name" value="Ribosomal_bL32"/>
</dbReference>
<dbReference type="InterPro" id="IPR044957">
    <property type="entry name" value="Ribosomal_bL32_bact"/>
</dbReference>
<dbReference type="InterPro" id="IPR011332">
    <property type="entry name" value="Ribosomal_zn-bd"/>
</dbReference>
<dbReference type="NCBIfam" id="TIGR01031">
    <property type="entry name" value="rpmF_bact"/>
    <property type="match status" value="1"/>
</dbReference>
<dbReference type="PANTHER" id="PTHR35534">
    <property type="entry name" value="50S RIBOSOMAL PROTEIN L32"/>
    <property type="match status" value="1"/>
</dbReference>
<dbReference type="PANTHER" id="PTHR35534:SF2">
    <property type="entry name" value="LARGE RIBOSOMAL SUBUNIT PROTEIN BL32"/>
    <property type="match status" value="1"/>
</dbReference>
<dbReference type="Pfam" id="PF01783">
    <property type="entry name" value="Ribosomal_L32p"/>
    <property type="match status" value="1"/>
</dbReference>
<dbReference type="SUPFAM" id="SSF57829">
    <property type="entry name" value="Zn-binding ribosomal proteins"/>
    <property type="match status" value="1"/>
</dbReference>
<comment type="similarity">
    <text evidence="2">Belongs to the bacterial ribosomal protein bL32 family.</text>
</comment>
<protein>
    <recommendedName>
        <fullName evidence="1">Large ribosomal subunit protein bL32B</fullName>
    </recommendedName>
    <alternativeName>
        <fullName evidence="2">50S ribosomal protein L32 2</fullName>
    </alternativeName>
</protein>
<sequence>MAVPFRRTSKAKKRKRRTHVKLQLPGMNECSNCGEYRLSHHVCPECGQYDGKDVANS</sequence>
<feature type="chain" id="PRO_0000172362" description="Large ribosomal subunit protein bL32B">
    <location>
        <begin position="1"/>
        <end position="57"/>
    </location>
</feature>
<keyword id="KW-0687">Ribonucleoprotein</keyword>
<keyword id="KW-0689">Ribosomal protein</keyword>
<accession>P66208</accession>
<accession>Q929X0</accession>
<organism>
    <name type="scientific">Listeria innocua serovar 6a (strain ATCC BAA-680 / CLIP 11262)</name>
    <dbReference type="NCBI Taxonomy" id="272626"/>
    <lineage>
        <taxon>Bacteria</taxon>
        <taxon>Bacillati</taxon>
        <taxon>Bacillota</taxon>
        <taxon>Bacilli</taxon>
        <taxon>Bacillales</taxon>
        <taxon>Listeriaceae</taxon>
        <taxon>Listeria</taxon>
    </lineage>
</organism>
<evidence type="ECO:0000255" key="1">
    <source>
        <dbReference type="HAMAP-Rule" id="MF_00340"/>
    </source>
</evidence>
<evidence type="ECO:0000305" key="2"/>
<name>RL322_LISIN</name>
<gene>
    <name type="primary">rpmF2</name>
    <name type="ordered locus">lin2153</name>
</gene>
<proteinExistence type="inferred from homology"/>
<reference key="1">
    <citation type="journal article" date="2001" name="Science">
        <title>Comparative genomics of Listeria species.</title>
        <authorList>
            <person name="Glaser P."/>
            <person name="Frangeul L."/>
            <person name="Buchrieser C."/>
            <person name="Rusniok C."/>
            <person name="Amend A."/>
            <person name="Baquero F."/>
            <person name="Berche P."/>
            <person name="Bloecker H."/>
            <person name="Brandt P."/>
            <person name="Chakraborty T."/>
            <person name="Charbit A."/>
            <person name="Chetouani F."/>
            <person name="Couve E."/>
            <person name="de Daruvar A."/>
            <person name="Dehoux P."/>
            <person name="Domann E."/>
            <person name="Dominguez-Bernal G."/>
            <person name="Duchaud E."/>
            <person name="Durant L."/>
            <person name="Dussurget O."/>
            <person name="Entian K.-D."/>
            <person name="Fsihi H."/>
            <person name="Garcia-del Portillo F."/>
            <person name="Garrido P."/>
            <person name="Gautier L."/>
            <person name="Goebel W."/>
            <person name="Gomez-Lopez N."/>
            <person name="Hain T."/>
            <person name="Hauf J."/>
            <person name="Jackson D."/>
            <person name="Jones L.-M."/>
            <person name="Kaerst U."/>
            <person name="Kreft J."/>
            <person name="Kuhn M."/>
            <person name="Kunst F."/>
            <person name="Kurapkat G."/>
            <person name="Madueno E."/>
            <person name="Maitournam A."/>
            <person name="Mata Vicente J."/>
            <person name="Ng E."/>
            <person name="Nedjari H."/>
            <person name="Nordsiek G."/>
            <person name="Novella S."/>
            <person name="de Pablos B."/>
            <person name="Perez-Diaz J.-C."/>
            <person name="Purcell R."/>
            <person name="Remmel B."/>
            <person name="Rose M."/>
            <person name="Schlueter T."/>
            <person name="Simoes N."/>
            <person name="Tierrez A."/>
            <person name="Vazquez-Boland J.-A."/>
            <person name="Voss H."/>
            <person name="Wehland J."/>
            <person name="Cossart P."/>
        </authorList>
    </citation>
    <scope>NUCLEOTIDE SEQUENCE [LARGE SCALE GENOMIC DNA]</scope>
    <source>
        <strain>ATCC BAA-680 / CLIP 11262</strain>
    </source>
</reference>